<comment type="similarity">
    <text evidence="1">Belongs to the UPF0181 family.</text>
</comment>
<name>YOAH_SHIBS</name>
<organism>
    <name type="scientific">Shigella boydii serotype 4 (strain Sb227)</name>
    <dbReference type="NCBI Taxonomy" id="300268"/>
    <lineage>
        <taxon>Bacteria</taxon>
        <taxon>Pseudomonadati</taxon>
        <taxon>Pseudomonadota</taxon>
        <taxon>Gammaproteobacteria</taxon>
        <taxon>Enterobacterales</taxon>
        <taxon>Enterobacteriaceae</taxon>
        <taxon>Shigella</taxon>
    </lineage>
</organism>
<feature type="chain" id="PRO_0000236633" description="UPF0181 protein YoaH">
    <location>
        <begin position="1"/>
        <end position="59"/>
    </location>
</feature>
<gene>
    <name evidence="1" type="primary">yoaH</name>
    <name type="ordered locus">SBO_1273</name>
</gene>
<protein>
    <recommendedName>
        <fullName evidence="1">UPF0181 protein YoaH</fullName>
    </recommendedName>
</protein>
<evidence type="ECO:0000255" key="1">
    <source>
        <dbReference type="HAMAP-Rule" id="MF_00507"/>
    </source>
</evidence>
<dbReference type="EMBL" id="CP000036">
    <property type="protein sequence ID" value="ABB65901.1"/>
    <property type="molecule type" value="Genomic_DNA"/>
</dbReference>
<dbReference type="RefSeq" id="WP_000457334.1">
    <property type="nucleotide sequence ID" value="NC_007613.1"/>
</dbReference>
<dbReference type="SMR" id="Q321V7"/>
<dbReference type="KEGG" id="sbo:SBO_1273"/>
<dbReference type="HOGENOM" id="CLU_185263_0_0_6"/>
<dbReference type="Proteomes" id="UP000007067">
    <property type="component" value="Chromosome"/>
</dbReference>
<dbReference type="HAMAP" id="MF_00507">
    <property type="entry name" value="UPF0181"/>
    <property type="match status" value="1"/>
</dbReference>
<dbReference type="InterPro" id="IPR005371">
    <property type="entry name" value="UPF0181"/>
</dbReference>
<dbReference type="NCBIfam" id="NF003476">
    <property type="entry name" value="PRK05114.1"/>
    <property type="match status" value="1"/>
</dbReference>
<dbReference type="Pfam" id="PF03701">
    <property type="entry name" value="UPF0181"/>
    <property type="match status" value="1"/>
</dbReference>
<accession>Q321V7</accession>
<sequence length="59" mass="6554">MFAGLPSLTHEQQQKAVERIQELMAQGMSSGQAIALVAEELRANHSGERIVARFEDEDE</sequence>
<proteinExistence type="inferred from homology"/>
<reference key="1">
    <citation type="journal article" date="2005" name="Nucleic Acids Res.">
        <title>Genome dynamics and diversity of Shigella species, the etiologic agents of bacillary dysentery.</title>
        <authorList>
            <person name="Yang F."/>
            <person name="Yang J."/>
            <person name="Zhang X."/>
            <person name="Chen L."/>
            <person name="Jiang Y."/>
            <person name="Yan Y."/>
            <person name="Tang X."/>
            <person name="Wang J."/>
            <person name="Xiong Z."/>
            <person name="Dong J."/>
            <person name="Xue Y."/>
            <person name="Zhu Y."/>
            <person name="Xu X."/>
            <person name="Sun L."/>
            <person name="Chen S."/>
            <person name="Nie H."/>
            <person name="Peng J."/>
            <person name="Xu J."/>
            <person name="Wang Y."/>
            <person name="Yuan Z."/>
            <person name="Wen Y."/>
            <person name="Yao Z."/>
            <person name="Shen Y."/>
            <person name="Qiang B."/>
            <person name="Hou Y."/>
            <person name="Yu J."/>
            <person name="Jin Q."/>
        </authorList>
    </citation>
    <scope>NUCLEOTIDE SEQUENCE [LARGE SCALE GENOMIC DNA]</scope>
    <source>
        <strain>Sb227</strain>
    </source>
</reference>